<accession>A8LLG9</accession>
<name>RL35_DINSH</name>
<gene>
    <name evidence="1" type="primary">rpmI</name>
    <name type="ordered locus">Dshi_0230</name>
</gene>
<comment type="similarity">
    <text evidence="1">Belongs to the bacterial ribosomal protein bL35 family.</text>
</comment>
<evidence type="ECO:0000255" key="1">
    <source>
        <dbReference type="HAMAP-Rule" id="MF_00514"/>
    </source>
</evidence>
<evidence type="ECO:0000256" key="2">
    <source>
        <dbReference type="SAM" id="MobiDB-lite"/>
    </source>
</evidence>
<evidence type="ECO:0000305" key="3"/>
<keyword id="KW-1185">Reference proteome</keyword>
<keyword id="KW-0687">Ribonucleoprotein</keyword>
<keyword id="KW-0689">Ribosomal protein</keyword>
<proteinExistence type="inferred from homology"/>
<reference key="1">
    <citation type="journal article" date="2010" name="ISME J.">
        <title>The complete genome sequence of the algal symbiont Dinoroseobacter shibae: a hitchhiker's guide to life in the sea.</title>
        <authorList>
            <person name="Wagner-Dobler I."/>
            <person name="Ballhausen B."/>
            <person name="Berger M."/>
            <person name="Brinkhoff T."/>
            <person name="Buchholz I."/>
            <person name="Bunk B."/>
            <person name="Cypionka H."/>
            <person name="Daniel R."/>
            <person name="Drepper T."/>
            <person name="Gerdts G."/>
            <person name="Hahnke S."/>
            <person name="Han C."/>
            <person name="Jahn D."/>
            <person name="Kalhoefer D."/>
            <person name="Kiss H."/>
            <person name="Klenk H.P."/>
            <person name="Kyrpides N."/>
            <person name="Liebl W."/>
            <person name="Liesegang H."/>
            <person name="Meincke L."/>
            <person name="Pati A."/>
            <person name="Petersen J."/>
            <person name="Piekarski T."/>
            <person name="Pommerenke C."/>
            <person name="Pradella S."/>
            <person name="Pukall R."/>
            <person name="Rabus R."/>
            <person name="Stackebrandt E."/>
            <person name="Thole S."/>
            <person name="Thompson L."/>
            <person name="Tielen P."/>
            <person name="Tomasch J."/>
            <person name="von Jan M."/>
            <person name="Wanphrut N."/>
            <person name="Wichels A."/>
            <person name="Zech H."/>
            <person name="Simon M."/>
        </authorList>
    </citation>
    <scope>NUCLEOTIDE SEQUENCE [LARGE SCALE GENOMIC DNA]</scope>
    <source>
        <strain>DSM 16493 / NCIMB 14021 / DFL 12</strain>
    </source>
</reference>
<organism>
    <name type="scientific">Dinoroseobacter shibae (strain DSM 16493 / NCIMB 14021 / DFL 12)</name>
    <dbReference type="NCBI Taxonomy" id="398580"/>
    <lineage>
        <taxon>Bacteria</taxon>
        <taxon>Pseudomonadati</taxon>
        <taxon>Pseudomonadota</taxon>
        <taxon>Alphaproteobacteria</taxon>
        <taxon>Rhodobacterales</taxon>
        <taxon>Roseobacteraceae</taxon>
        <taxon>Dinoroseobacter</taxon>
    </lineage>
</organism>
<dbReference type="EMBL" id="CP000830">
    <property type="protein sequence ID" value="ABV91979.1"/>
    <property type="molecule type" value="Genomic_DNA"/>
</dbReference>
<dbReference type="RefSeq" id="WP_012176912.1">
    <property type="nucleotide sequence ID" value="NC_009952.1"/>
</dbReference>
<dbReference type="SMR" id="A8LLG9"/>
<dbReference type="STRING" id="398580.Dshi_0230"/>
<dbReference type="KEGG" id="dsh:Dshi_0230"/>
<dbReference type="eggNOG" id="COG0291">
    <property type="taxonomic scope" value="Bacteria"/>
</dbReference>
<dbReference type="HOGENOM" id="CLU_169643_2_1_5"/>
<dbReference type="OrthoDB" id="9804851at2"/>
<dbReference type="Proteomes" id="UP000006833">
    <property type="component" value="Chromosome"/>
</dbReference>
<dbReference type="GO" id="GO:0022625">
    <property type="term" value="C:cytosolic large ribosomal subunit"/>
    <property type="evidence" value="ECO:0007669"/>
    <property type="project" value="TreeGrafter"/>
</dbReference>
<dbReference type="GO" id="GO:0003735">
    <property type="term" value="F:structural constituent of ribosome"/>
    <property type="evidence" value="ECO:0007669"/>
    <property type="project" value="InterPro"/>
</dbReference>
<dbReference type="GO" id="GO:0006412">
    <property type="term" value="P:translation"/>
    <property type="evidence" value="ECO:0007669"/>
    <property type="project" value="UniProtKB-UniRule"/>
</dbReference>
<dbReference type="FunFam" id="4.10.410.60:FF:000001">
    <property type="entry name" value="50S ribosomal protein L35"/>
    <property type="match status" value="1"/>
</dbReference>
<dbReference type="Gene3D" id="4.10.410.60">
    <property type="match status" value="1"/>
</dbReference>
<dbReference type="HAMAP" id="MF_00514">
    <property type="entry name" value="Ribosomal_bL35"/>
    <property type="match status" value="1"/>
</dbReference>
<dbReference type="InterPro" id="IPR001706">
    <property type="entry name" value="Ribosomal_bL35"/>
</dbReference>
<dbReference type="InterPro" id="IPR021137">
    <property type="entry name" value="Ribosomal_bL35-like"/>
</dbReference>
<dbReference type="InterPro" id="IPR018265">
    <property type="entry name" value="Ribosomal_bL35_CS"/>
</dbReference>
<dbReference type="InterPro" id="IPR037229">
    <property type="entry name" value="Ribosomal_bL35_sf"/>
</dbReference>
<dbReference type="NCBIfam" id="TIGR00001">
    <property type="entry name" value="rpmI_bact"/>
    <property type="match status" value="1"/>
</dbReference>
<dbReference type="PANTHER" id="PTHR33343">
    <property type="entry name" value="54S RIBOSOMAL PROTEIN BL35M"/>
    <property type="match status" value="1"/>
</dbReference>
<dbReference type="PANTHER" id="PTHR33343:SF1">
    <property type="entry name" value="LARGE RIBOSOMAL SUBUNIT PROTEIN BL35M"/>
    <property type="match status" value="1"/>
</dbReference>
<dbReference type="Pfam" id="PF01632">
    <property type="entry name" value="Ribosomal_L35p"/>
    <property type="match status" value="1"/>
</dbReference>
<dbReference type="PRINTS" id="PR00064">
    <property type="entry name" value="RIBOSOMALL35"/>
</dbReference>
<dbReference type="SUPFAM" id="SSF143034">
    <property type="entry name" value="L35p-like"/>
    <property type="match status" value="1"/>
</dbReference>
<dbReference type="PROSITE" id="PS00936">
    <property type="entry name" value="RIBOSOMAL_L35"/>
    <property type="match status" value="1"/>
</dbReference>
<sequence length="66" mass="7389">MPKMKTKSSAKKRFKMTATGKVRAGQAGKRHGMIKRTTKFIRTARGTTILSAPDAKIVKSYMPYSR</sequence>
<feature type="chain" id="PRO_1000081607" description="Large ribosomal subunit protein bL35">
    <location>
        <begin position="1"/>
        <end position="66"/>
    </location>
</feature>
<feature type="region of interest" description="Disordered" evidence="2">
    <location>
        <begin position="1"/>
        <end position="32"/>
    </location>
</feature>
<feature type="compositionally biased region" description="Basic residues" evidence="2">
    <location>
        <begin position="1"/>
        <end position="15"/>
    </location>
</feature>
<protein>
    <recommendedName>
        <fullName evidence="1">Large ribosomal subunit protein bL35</fullName>
    </recommendedName>
    <alternativeName>
        <fullName evidence="3">50S ribosomal protein L35</fullName>
    </alternativeName>
</protein>